<reference key="1">
    <citation type="journal article" date="2009" name="Nature">
        <title>Evolution of pathogenicity and sexual reproduction in eight Candida genomes.</title>
        <authorList>
            <person name="Butler G."/>
            <person name="Rasmussen M.D."/>
            <person name="Lin M.F."/>
            <person name="Santos M.A.S."/>
            <person name="Sakthikumar S."/>
            <person name="Munro C.A."/>
            <person name="Rheinbay E."/>
            <person name="Grabherr M."/>
            <person name="Forche A."/>
            <person name="Reedy J.L."/>
            <person name="Agrafioti I."/>
            <person name="Arnaud M.B."/>
            <person name="Bates S."/>
            <person name="Brown A.J.P."/>
            <person name="Brunke S."/>
            <person name="Costanzo M.C."/>
            <person name="Fitzpatrick D.A."/>
            <person name="de Groot P.W.J."/>
            <person name="Harris D."/>
            <person name="Hoyer L.L."/>
            <person name="Hube B."/>
            <person name="Klis F.M."/>
            <person name="Kodira C."/>
            <person name="Lennard N."/>
            <person name="Logue M.E."/>
            <person name="Martin R."/>
            <person name="Neiman A.M."/>
            <person name="Nikolaou E."/>
            <person name="Quail M.A."/>
            <person name="Quinn J."/>
            <person name="Santos M.C."/>
            <person name="Schmitzberger F.F."/>
            <person name="Sherlock G."/>
            <person name="Shah P."/>
            <person name="Silverstein K.A.T."/>
            <person name="Skrzypek M.S."/>
            <person name="Soll D."/>
            <person name="Staggs R."/>
            <person name="Stansfield I."/>
            <person name="Stumpf M.P.H."/>
            <person name="Sudbery P.E."/>
            <person name="Srikantha T."/>
            <person name="Zeng Q."/>
            <person name="Berman J."/>
            <person name="Berriman M."/>
            <person name="Heitman J."/>
            <person name="Gow N.A.R."/>
            <person name="Lorenz M.C."/>
            <person name="Birren B.W."/>
            <person name="Kellis M."/>
            <person name="Cuomo C.A."/>
        </authorList>
    </citation>
    <scope>NUCLEOTIDE SEQUENCE [LARGE SCALE GENOMIC DNA]</scope>
    <source>
        <strain>WO-1</strain>
    </source>
</reference>
<keyword id="KW-0496">Mitochondrion</keyword>
<keyword id="KW-0507">mRNA processing</keyword>
<keyword id="KW-0508">mRNA splicing</keyword>
<keyword id="KW-0677">Repeat</keyword>
<keyword id="KW-0809">Transit peptide</keyword>
<proteinExistence type="inferred from homology"/>
<feature type="transit peptide" description="Mitochondrion" evidence="2">
    <location>
        <begin position="1"/>
        <end position="90"/>
    </location>
</feature>
<feature type="chain" id="PRO_0000402257" description="Mitochondrial 15S rRNA processing factor CCM1" evidence="2">
    <location>
        <begin position="91"/>
        <end position="770"/>
    </location>
</feature>
<feature type="repeat" description="PPR 1" evidence="3">
    <location>
        <begin position="276"/>
        <end position="310"/>
    </location>
</feature>
<feature type="repeat" description="PPR 2" evidence="3">
    <location>
        <begin position="311"/>
        <end position="346"/>
    </location>
</feature>
<feature type="repeat" description="PPR 3" evidence="3">
    <location>
        <begin position="349"/>
        <end position="383"/>
    </location>
</feature>
<feature type="repeat" description="PPR 4" evidence="3">
    <location>
        <begin position="384"/>
        <end position="419"/>
    </location>
</feature>
<feature type="repeat" description="PPR 5" evidence="3">
    <location>
        <begin position="420"/>
        <end position="454"/>
    </location>
</feature>
<feature type="repeat" description="PPR 6" evidence="3">
    <location>
        <begin position="636"/>
        <end position="666"/>
    </location>
</feature>
<feature type="region of interest" description="Disordered" evidence="4">
    <location>
        <begin position="28"/>
        <end position="67"/>
    </location>
</feature>
<feature type="region of interest" description="Disordered" evidence="4">
    <location>
        <begin position="90"/>
        <end position="114"/>
    </location>
</feature>
<feature type="region of interest" description="Disordered" evidence="4">
    <location>
        <begin position="588"/>
        <end position="610"/>
    </location>
</feature>
<feature type="compositionally biased region" description="Basic and acidic residues" evidence="4">
    <location>
        <begin position="43"/>
        <end position="53"/>
    </location>
</feature>
<feature type="compositionally biased region" description="Polar residues" evidence="4">
    <location>
        <begin position="55"/>
        <end position="65"/>
    </location>
</feature>
<feature type="compositionally biased region" description="Basic and acidic residues" evidence="4">
    <location>
        <begin position="588"/>
        <end position="598"/>
    </location>
</feature>
<feature type="compositionally biased region" description="Polar residues" evidence="4">
    <location>
        <begin position="599"/>
        <end position="610"/>
    </location>
</feature>
<evidence type="ECO:0000250" key="1">
    <source>
        <dbReference type="UniProtKB" id="P48237"/>
    </source>
</evidence>
<evidence type="ECO:0000255" key="2"/>
<evidence type="ECO:0000255" key="3">
    <source>
        <dbReference type="PROSITE-ProRule" id="PRU00708"/>
    </source>
</evidence>
<evidence type="ECO:0000256" key="4">
    <source>
        <dbReference type="SAM" id="MobiDB-lite"/>
    </source>
</evidence>
<evidence type="ECO:0000305" key="5"/>
<accession>C4YSG0</accession>
<name>CCM1_CANAW</name>
<gene>
    <name type="primary">CCM1</name>
    <name type="ORF">CAWG_05026</name>
</gene>
<dbReference type="EMBL" id="CM000312">
    <property type="protein sequence ID" value="EEQ46663.1"/>
    <property type="molecule type" value="Genomic_DNA"/>
</dbReference>
<dbReference type="SMR" id="C4YSG0"/>
<dbReference type="PaxDb" id="5476-C4YSG0"/>
<dbReference type="VEuPathDB" id="FungiDB:CAWG_05026"/>
<dbReference type="HOGENOM" id="CLU_019745_0_0_1"/>
<dbReference type="OMA" id="ESSAIWA"/>
<dbReference type="OrthoDB" id="19380at766764"/>
<dbReference type="Proteomes" id="UP000001429">
    <property type="component" value="Chromosome 6"/>
</dbReference>
<dbReference type="GO" id="GO:0005739">
    <property type="term" value="C:mitochondrion"/>
    <property type="evidence" value="ECO:0007669"/>
    <property type="project" value="UniProtKB-SubCell"/>
</dbReference>
<dbReference type="GO" id="GO:0006397">
    <property type="term" value="P:mRNA processing"/>
    <property type="evidence" value="ECO:0007669"/>
    <property type="project" value="UniProtKB-KW"/>
</dbReference>
<dbReference type="GO" id="GO:0008380">
    <property type="term" value="P:RNA splicing"/>
    <property type="evidence" value="ECO:0007669"/>
    <property type="project" value="UniProtKB-KW"/>
</dbReference>
<dbReference type="Gene3D" id="1.25.40.10">
    <property type="entry name" value="Tetratricopeptide repeat domain"/>
    <property type="match status" value="2"/>
</dbReference>
<dbReference type="InterPro" id="IPR002885">
    <property type="entry name" value="Pentatricopeptide_rpt"/>
</dbReference>
<dbReference type="InterPro" id="IPR011990">
    <property type="entry name" value="TPR-like_helical_dom_sf"/>
</dbReference>
<dbReference type="PANTHER" id="PTHR47447">
    <property type="entry name" value="OS03G0856100 PROTEIN"/>
    <property type="match status" value="1"/>
</dbReference>
<dbReference type="PANTHER" id="PTHR47447:SF17">
    <property type="entry name" value="OS12G0638900 PROTEIN"/>
    <property type="match status" value="1"/>
</dbReference>
<dbReference type="Pfam" id="PF01535">
    <property type="entry name" value="PPR"/>
    <property type="match status" value="2"/>
</dbReference>
<dbReference type="PROSITE" id="PS51375">
    <property type="entry name" value="PPR"/>
    <property type="match status" value="6"/>
</dbReference>
<comment type="function">
    <text evidence="1">Regulates mitochondrial small subunit maturation by controlling 15S rRNA 5'-end processing. Localizes to the 5' precursor of the 15S rRNA in a position that is subsequently occupied by mS47 in the mature yeast mtSSU. Uses structure and sequence-specific RNA recognition, binding to a single-stranded region of the precursor and specifically recognizing bases -6 to -1. The exchange of Ccm1 for mS47 is coupled to the irreversible removal of precursor rRNA that is accompanied by conformational changes of the mitoribosomal proteins uS5m and mS26. These conformational changes signal completion of 5'-end rRNA processing through protection of the mature 5'-end of the 15S rRNA and stabilization of mS47. The removal of the 5' precursor together with the dissociation of Ccm1 may be catalyzed by the 5'-3' exoribonuclease Pet127. Involved in the specific removal of group I introns in mitochondrial encoded transcripts.</text>
</comment>
<comment type="subunit">
    <text evidence="1">Binds to mitochondrial small subunit 15S rRNA.</text>
</comment>
<comment type="subcellular location">
    <subcellularLocation>
        <location evidence="1">Mitochondrion</location>
    </subcellularLocation>
</comment>
<comment type="miscellaneous">
    <text evidence="1">Involved in mitochondrial-nuclear incompatibility, a major determinant in reproductive isolation between species, through hybrid incompatibility of Ccm1 and its interacting partner 15S rRNA between yeast species.</text>
</comment>
<comment type="similarity">
    <text evidence="5">Belongs to the CCM1 family.</text>
</comment>
<protein>
    <recommendedName>
        <fullName>Mitochondrial 15S rRNA processing factor CCM1</fullName>
    </recommendedName>
</protein>
<organism>
    <name type="scientific">Candida albicans (strain WO-1)</name>
    <name type="common">Yeast</name>
    <dbReference type="NCBI Taxonomy" id="294748"/>
    <lineage>
        <taxon>Eukaryota</taxon>
        <taxon>Fungi</taxon>
        <taxon>Dikarya</taxon>
        <taxon>Ascomycota</taxon>
        <taxon>Saccharomycotina</taxon>
        <taxon>Pichiomycetes</taxon>
        <taxon>Debaryomycetaceae</taxon>
        <taxon>Candida/Lodderomyces clade</taxon>
        <taxon>Candida</taxon>
    </lineage>
</organism>
<sequence length="770" mass="88722">MIRLILWNNVQSLVFKRCLFVPSNSLTNKRKRRIPPSKPRSSNRKDGDIEPYRMTDQNQTPNTGSIARLPAEVKKELKDLRSFTKVIAQHLKPEQENDSLTSAEKPDTSQLPPIDIEEATDDIFGEISGTKKLSANAVPPPPPPPPPGLDIPDEIKERLGLLSELLVPAKTSNNKLPEKQVENNWKLLLSQLDQAGGLSGLSKRSVSKFFSKIPPKNLKNLIPMIENMYNKAEMSIPHPIYYMFVRSLTLGDKISDSQMQLINKYFQEISKQTDLKIDHYETMILAYVKNNHMEKIDGILAQMKKKNIEISKMIYTSIVRGYIFYQKDHQRALDTFDSMKFLSQKTQPDEKVYTDVIVSCVMHREIERALDLYYELKDKGMNVNQNLLSTLAKGCSRSKQFKTQAWNFLFQVYDHGWVPNLQTYEHMLYIAARDGDVELTRVLFYKMLQTNSVTIRAFRYLILSYSKYVPPHKRKEKHLILLNHKGQLFRQNILQDVDFSKPVHGFPFLPSSHIPDSKFVLAESSAIWAHTVMNNPSFLRQQTLVASYVSIALELGDFTEFKDRFDSASYLNTDGIPKVREIEIIEPRQDEPTEKATTTEEQITSSEPDTNSLIRSPILNQLQQNINDNQFKAPRDSYLYNLAIKAAGKFKDYSFAQQILHERGQFRKSNSFKLLSPKQQNQDDFQFAGYLVECWTNMNLLEDAYAVVLSSVDRFPWSWRELGVLNNAAMKLGSLELAEAVRKVAQVTQVKHHGKIKRQDFKTYVMKRGY</sequence>